<protein>
    <recommendedName>
        <fullName>Sulfur-rich protein</fullName>
    </recommendedName>
    <alternativeName>
        <fullName>Cysteine-rich protein A</fullName>
    </alternativeName>
</protein>
<accession>Q9PJV1</accession>
<proteinExistence type="predicted"/>
<gene>
    <name type="primary">srp</name>
    <name type="synonym">crpA</name>
    <name type="ordered locus">TC_0726</name>
</gene>
<reference key="1">
    <citation type="journal article" date="2000" name="Nucleic Acids Res.">
        <title>Genome sequences of Chlamydia trachomatis MoPn and Chlamydia pneumoniae AR39.</title>
        <authorList>
            <person name="Read T.D."/>
            <person name="Brunham R.C."/>
            <person name="Shen C."/>
            <person name="Gill S.R."/>
            <person name="Heidelberg J.F."/>
            <person name="White O."/>
            <person name="Hickey E.K."/>
            <person name="Peterson J.D."/>
            <person name="Utterback T.R."/>
            <person name="Berry K.J."/>
            <person name="Bass S."/>
            <person name="Linher K.D."/>
            <person name="Weidman J.F."/>
            <person name="Khouri H.M."/>
            <person name="Craven B."/>
            <person name="Bowman C."/>
            <person name="Dodson R.J."/>
            <person name="Gwinn M.L."/>
            <person name="Nelson W.C."/>
            <person name="DeBoy R.T."/>
            <person name="Kolonay J.F."/>
            <person name="McClarty G."/>
            <person name="Salzberg S.L."/>
            <person name="Eisen J.A."/>
            <person name="Fraser C.M."/>
        </authorList>
    </citation>
    <scope>NUCLEOTIDE SEQUENCE [LARGE SCALE GENOMIC DNA]</scope>
    <source>
        <strain>MoPn / Nigg</strain>
    </source>
</reference>
<evidence type="ECO:0000255" key="1"/>
<evidence type="ECO:0000256" key="2">
    <source>
        <dbReference type="SAM" id="MobiDB-lite"/>
    </source>
</evidence>
<evidence type="ECO:0000305" key="3"/>
<name>SRP_CHLMU</name>
<feature type="chain" id="PRO_0000207121" description="Sulfur-rich protein">
    <location>
        <begin position="1"/>
        <end position="152"/>
    </location>
</feature>
<feature type="transmembrane region" description="Helical" evidence="1">
    <location>
        <begin position="44"/>
        <end position="64"/>
    </location>
</feature>
<feature type="transmembrane region" description="Helical" evidence="1">
    <location>
        <begin position="73"/>
        <end position="93"/>
    </location>
</feature>
<feature type="region of interest" description="Disordered" evidence="2">
    <location>
        <begin position="1"/>
        <end position="21"/>
    </location>
</feature>
<feature type="compositionally biased region" description="Polar residues" evidence="2">
    <location>
        <begin position="1"/>
        <end position="11"/>
    </location>
</feature>
<feature type="compositionally biased region" description="Low complexity" evidence="2">
    <location>
        <begin position="12"/>
        <end position="21"/>
    </location>
</feature>
<comment type="subcellular location">
    <subcellularLocation>
        <location evidence="3">Membrane</location>
        <topology evidence="3">Multi-pass membrane protein</topology>
    </subcellularLocation>
</comment>
<keyword id="KW-0472">Membrane</keyword>
<keyword id="KW-0812">Transmembrane</keyword>
<keyword id="KW-1133">Transmembrane helix</keyword>
<sequence length="152" mass="16201">MSTTPIVSGVTSQNNSSENVSNNARSLTLKERASKILSSTAFKVGLAVVGIFLVILSIVLLFILPATAASNPIYLAIPAILGCVNICIGILSMNKGSCSEAKWKLCKNVLKTSEDILDDGELNNSNKIFTDDNLSRVEDIVITLSSRRNSVA</sequence>
<organism>
    <name type="scientific">Chlamydia muridarum (strain MoPn / Nigg)</name>
    <dbReference type="NCBI Taxonomy" id="243161"/>
    <lineage>
        <taxon>Bacteria</taxon>
        <taxon>Pseudomonadati</taxon>
        <taxon>Chlamydiota</taxon>
        <taxon>Chlamydiia</taxon>
        <taxon>Chlamydiales</taxon>
        <taxon>Chlamydiaceae</taxon>
        <taxon>Chlamydia/Chlamydophila group</taxon>
        <taxon>Chlamydia</taxon>
    </lineage>
</organism>
<dbReference type="EMBL" id="AE002160">
    <property type="protein sequence ID" value="AAF39536.1"/>
    <property type="molecule type" value="Genomic_DNA"/>
</dbReference>
<dbReference type="PIR" id="B81671">
    <property type="entry name" value="B81671"/>
</dbReference>
<dbReference type="RefSeq" id="WP_010231348.1">
    <property type="nucleotide sequence ID" value="NZ_CP063055.1"/>
</dbReference>
<dbReference type="SMR" id="Q9PJV1"/>
<dbReference type="GeneID" id="1246089"/>
<dbReference type="KEGG" id="cmu:TC_0726"/>
<dbReference type="HOGENOM" id="CLU_1737288_0_0_0"/>
<dbReference type="OrthoDB" id="18131at2"/>
<dbReference type="Proteomes" id="UP000000800">
    <property type="component" value="Chromosome"/>
</dbReference>
<dbReference type="GO" id="GO:0019867">
    <property type="term" value="C:outer membrane"/>
    <property type="evidence" value="ECO:0007669"/>
    <property type="project" value="InterPro"/>
</dbReference>
<dbReference type="InterPro" id="IPR008436">
    <property type="entry name" value="CRPA"/>
</dbReference>
<dbReference type="Pfam" id="PF05745">
    <property type="entry name" value="CRPA"/>
    <property type="match status" value="1"/>
</dbReference>